<evidence type="ECO:0000255" key="1">
    <source>
        <dbReference type="HAMAP-Rule" id="MF_01334"/>
    </source>
</evidence>
<evidence type="ECO:0000256" key="2">
    <source>
        <dbReference type="SAM" id="MobiDB-lite"/>
    </source>
</evidence>
<evidence type="ECO:0000305" key="3"/>
<feature type="chain" id="PRO_1000086626" description="Large ribosomal subunit protein bL25">
    <location>
        <begin position="1"/>
        <end position="211"/>
    </location>
</feature>
<feature type="region of interest" description="Disordered" evidence="2">
    <location>
        <begin position="1"/>
        <end position="23"/>
    </location>
</feature>
<feature type="region of interest" description="Disordered" evidence="2">
    <location>
        <begin position="191"/>
        <end position="211"/>
    </location>
</feature>
<feature type="compositionally biased region" description="Acidic residues" evidence="2">
    <location>
        <begin position="196"/>
        <end position="211"/>
    </location>
</feature>
<proteinExistence type="inferred from homology"/>
<accession>A8LRY8</accession>
<name>RL25_DINSH</name>
<reference key="1">
    <citation type="journal article" date="2010" name="ISME J.">
        <title>The complete genome sequence of the algal symbiont Dinoroseobacter shibae: a hitchhiker's guide to life in the sea.</title>
        <authorList>
            <person name="Wagner-Dobler I."/>
            <person name="Ballhausen B."/>
            <person name="Berger M."/>
            <person name="Brinkhoff T."/>
            <person name="Buchholz I."/>
            <person name="Bunk B."/>
            <person name="Cypionka H."/>
            <person name="Daniel R."/>
            <person name="Drepper T."/>
            <person name="Gerdts G."/>
            <person name="Hahnke S."/>
            <person name="Han C."/>
            <person name="Jahn D."/>
            <person name="Kalhoefer D."/>
            <person name="Kiss H."/>
            <person name="Klenk H.P."/>
            <person name="Kyrpides N."/>
            <person name="Liebl W."/>
            <person name="Liesegang H."/>
            <person name="Meincke L."/>
            <person name="Pati A."/>
            <person name="Petersen J."/>
            <person name="Piekarski T."/>
            <person name="Pommerenke C."/>
            <person name="Pradella S."/>
            <person name="Pukall R."/>
            <person name="Rabus R."/>
            <person name="Stackebrandt E."/>
            <person name="Thole S."/>
            <person name="Thompson L."/>
            <person name="Tielen P."/>
            <person name="Tomasch J."/>
            <person name="von Jan M."/>
            <person name="Wanphrut N."/>
            <person name="Wichels A."/>
            <person name="Zech H."/>
            <person name="Simon M."/>
        </authorList>
    </citation>
    <scope>NUCLEOTIDE SEQUENCE [LARGE SCALE GENOMIC DNA]</scope>
    <source>
        <strain>DSM 16493 / NCIMB 14021 / DFL 12</strain>
    </source>
</reference>
<comment type="function">
    <text evidence="1">This is one of the proteins that binds to the 5S RNA in the ribosome where it forms part of the central protuberance.</text>
</comment>
<comment type="subunit">
    <text evidence="1">Part of the 50S ribosomal subunit; part of the 5S rRNA/L5/L18/L25 subcomplex. Contacts the 5S rRNA. Binds to the 5S rRNA independently of L5 and L18.</text>
</comment>
<comment type="similarity">
    <text evidence="1">Belongs to the bacterial ribosomal protein bL25 family. CTC subfamily.</text>
</comment>
<keyword id="KW-1185">Reference proteome</keyword>
<keyword id="KW-0687">Ribonucleoprotein</keyword>
<keyword id="KW-0689">Ribosomal protein</keyword>
<keyword id="KW-0694">RNA-binding</keyword>
<keyword id="KW-0699">rRNA-binding</keyword>
<sequence length="211" mass="22743">MAGEIPDLVAEPRAGTGKGAARQARRDGYVPGVVYGGGADPQPIQIKFNELLRRLKAGRFMATLFNLKVEGQEDVRVICRNVQRDVVKDLPTHLDLMRLRRTSKVNLFIPVEFINEGAAPGIKKGGVLTAVRPEVELRVTAGDIPESITVDLTGLDIGDTVTISSVTLPEGATPTIDRDFVIANIQAPSGLRSADNEADEEETEEATAEEV</sequence>
<dbReference type="EMBL" id="CP000830">
    <property type="protein sequence ID" value="ABV92695.1"/>
    <property type="molecule type" value="Genomic_DNA"/>
</dbReference>
<dbReference type="RefSeq" id="WP_012177627.1">
    <property type="nucleotide sequence ID" value="NC_009952.1"/>
</dbReference>
<dbReference type="SMR" id="A8LRY8"/>
<dbReference type="STRING" id="398580.Dshi_0950"/>
<dbReference type="KEGG" id="dsh:Dshi_0950"/>
<dbReference type="eggNOG" id="COG1825">
    <property type="taxonomic scope" value="Bacteria"/>
</dbReference>
<dbReference type="HOGENOM" id="CLU_075939_0_0_5"/>
<dbReference type="OrthoDB" id="9806411at2"/>
<dbReference type="Proteomes" id="UP000006833">
    <property type="component" value="Chromosome"/>
</dbReference>
<dbReference type="GO" id="GO:0022625">
    <property type="term" value="C:cytosolic large ribosomal subunit"/>
    <property type="evidence" value="ECO:0007669"/>
    <property type="project" value="TreeGrafter"/>
</dbReference>
<dbReference type="GO" id="GO:0008097">
    <property type="term" value="F:5S rRNA binding"/>
    <property type="evidence" value="ECO:0007669"/>
    <property type="project" value="InterPro"/>
</dbReference>
<dbReference type="GO" id="GO:0003735">
    <property type="term" value="F:structural constituent of ribosome"/>
    <property type="evidence" value="ECO:0007669"/>
    <property type="project" value="InterPro"/>
</dbReference>
<dbReference type="GO" id="GO:0006412">
    <property type="term" value="P:translation"/>
    <property type="evidence" value="ECO:0007669"/>
    <property type="project" value="UniProtKB-UniRule"/>
</dbReference>
<dbReference type="CDD" id="cd00495">
    <property type="entry name" value="Ribosomal_L25_TL5_CTC"/>
    <property type="match status" value="1"/>
</dbReference>
<dbReference type="Gene3D" id="2.170.120.20">
    <property type="entry name" value="Ribosomal protein L25, beta domain"/>
    <property type="match status" value="1"/>
</dbReference>
<dbReference type="Gene3D" id="2.40.240.10">
    <property type="entry name" value="Ribosomal Protein L25, Chain P"/>
    <property type="match status" value="1"/>
</dbReference>
<dbReference type="HAMAP" id="MF_01334">
    <property type="entry name" value="Ribosomal_bL25_CTC"/>
    <property type="match status" value="1"/>
</dbReference>
<dbReference type="InterPro" id="IPR020056">
    <property type="entry name" value="Rbsml_bL25/Gln-tRNA_synth_N"/>
</dbReference>
<dbReference type="InterPro" id="IPR011035">
    <property type="entry name" value="Ribosomal_bL25/Gln-tRNA_synth"/>
</dbReference>
<dbReference type="InterPro" id="IPR020057">
    <property type="entry name" value="Ribosomal_bL25_b-dom"/>
</dbReference>
<dbReference type="InterPro" id="IPR037121">
    <property type="entry name" value="Ribosomal_bL25_C"/>
</dbReference>
<dbReference type="InterPro" id="IPR001021">
    <property type="entry name" value="Ribosomal_bL25_long"/>
</dbReference>
<dbReference type="InterPro" id="IPR029751">
    <property type="entry name" value="Ribosomal_L25_dom"/>
</dbReference>
<dbReference type="InterPro" id="IPR020930">
    <property type="entry name" value="Ribosomal_uL5_bac-type"/>
</dbReference>
<dbReference type="NCBIfam" id="TIGR00731">
    <property type="entry name" value="bL25_bact_ctc"/>
    <property type="match status" value="1"/>
</dbReference>
<dbReference type="NCBIfam" id="NF004128">
    <property type="entry name" value="PRK05618.1-2"/>
    <property type="match status" value="1"/>
</dbReference>
<dbReference type="PANTHER" id="PTHR33284">
    <property type="entry name" value="RIBOSOMAL PROTEIN L25/GLN-TRNA SYNTHETASE, ANTI-CODON-BINDING DOMAIN-CONTAINING PROTEIN"/>
    <property type="match status" value="1"/>
</dbReference>
<dbReference type="PANTHER" id="PTHR33284:SF1">
    <property type="entry name" value="RIBOSOMAL PROTEIN L25_GLN-TRNA SYNTHETASE, ANTI-CODON-BINDING DOMAIN-CONTAINING PROTEIN"/>
    <property type="match status" value="1"/>
</dbReference>
<dbReference type="Pfam" id="PF01386">
    <property type="entry name" value="Ribosomal_L25p"/>
    <property type="match status" value="1"/>
</dbReference>
<dbReference type="Pfam" id="PF14693">
    <property type="entry name" value="Ribosomal_TL5_C"/>
    <property type="match status" value="1"/>
</dbReference>
<dbReference type="SUPFAM" id="SSF50715">
    <property type="entry name" value="Ribosomal protein L25-like"/>
    <property type="match status" value="1"/>
</dbReference>
<gene>
    <name evidence="1" type="primary">rplY</name>
    <name evidence="1" type="synonym">ctc</name>
    <name type="ordered locus">Dshi_0950</name>
</gene>
<organism>
    <name type="scientific">Dinoroseobacter shibae (strain DSM 16493 / NCIMB 14021 / DFL 12)</name>
    <dbReference type="NCBI Taxonomy" id="398580"/>
    <lineage>
        <taxon>Bacteria</taxon>
        <taxon>Pseudomonadati</taxon>
        <taxon>Pseudomonadota</taxon>
        <taxon>Alphaproteobacteria</taxon>
        <taxon>Rhodobacterales</taxon>
        <taxon>Roseobacteraceae</taxon>
        <taxon>Dinoroseobacter</taxon>
    </lineage>
</organism>
<protein>
    <recommendedName>
        <fullName evidence="1">Large ribosomal subunit protein bL25</fullName>
    </recommendedName>
    <alternativeName>
        <fullName evidence="3">50S ribosomal protein L25</fullName>
    </alternativeName>
    <alternativeName>
        <fullName evidence="1">General stress protein CTC</fullName>
    </alternativeName>
</protein>